<gene>
    <name evidence="1" type="primary">nadK</name>
    <name type="ordered locus">SP70585_1171</name>
</gene>
<keyword id="KW-0067">ATP-binding</keyword>
<keyword id="KW-0963">Cytoplasm</keyword>
<keyword id="KW-0418">Kinase</keyword>
<keyword id="KW-0520">NAD</keyword>
<keyword id="KW-0521">NADP</keyword>
<keyword id="KW-0547">Nucleotide-binding</keyword>
<keyword id="KW-0808">Transferase</keyword>
<organism>
    <name type="scientific">Streptococcus pneumoniae (strain 70585)</name>
    <dbReference type="NCBI Taxonomy" id="488221"/>
    <lineage>
        <taxon>Bacteria</taxon>
        <taxon>Bacillati</taxon>
        <taxon>Bacillota</taxon>
        <taxon>Bacilli</taxon>
        <taxon>Lactobacillales</taxon>
        <taxon>Streptococcaceae</taxon>
        <taxon>Streptococcus</taxon>
    </lineage>
</organism>
<name>NADK_STRP7</name>
<proteinExistence type="inferred from homology"/>
<comment type="function">
    <text evidence="1">Involved in the regulation of the intracellular balance of NAD and NADP, and is a key enzyme in the biosynthesis of NADP. Catalyzes specifically the phosphorylation on 2'-hydroxyl of the adenosine moiety of NAD to yield NADP.</text>
</comment>
<comment type="catalytic activity">
    <reaction evidence="1">
        <text>NAD(+) + ATP = ADP + NADP(+) + H(+)</text>
        <dbReference type="Rhea" id="RHEA:18629"/>
        <dbReference type="ChEBI" id="CHEBI:15378"/>
        <dbReference type="ChEBI" id="CHEBI:30616"/>
        <dbReference type="ChEBI" id="CHEBI:57540"/>
        <dbReference type="ChEBI" id="CHEBI:58349"/>
        <dbReference type="ChEBI" id="CHEBI:456216"/>
        <dbReference type="EC" id="2.7.1.23"/>
    </reaction>
</comment>
<comment type="cofactor">
    <cofactor evidence="1">
        <name>a divalent metal cation</name>
        <dbReference type="ChEBI" id="CHEBI:60240"/>
    </cofactor>
</comment>
<comment type="subcellular location">
    <subcellularLocation>
        <location evidence="1">Cytoplasm</location>
    </subcellularLocation>
</comment>
<comment type="similarity">
    <text evidence="1">Belongs to the NAD kinase family.</text>
</comment>
<reference key="1">
    <citation type="journal article" date="2010" name="Genome Biol.">
        <title>Structure and dynamics of the pan-genome of Streptococcus pneumoniae and closely related species.</title>
        <authorList>
            <person name="Donati C."/>
            <person name="Hiller N.L."/>
            <person name="Tettelin H."/>
            <person name="Muzzi A."/>
            <person name="Croucher N.J."/>
            <person name="Angiuoli S.V."/>
            <person name="Oggioni M."/>
            <person name="Dunning Hotopp J.C."/>
            <person name="Hu F.Z."/>
            <person name="Riley D.R."/>
            <person name="Covacci A."/>
            <person name="Mitchell T.J."/>
            <person name="Bentley S.D."/>
            <person name="Kilian M."/>
            <person name="Ehrlich G.D."/>
            <person name="Rappuoli R."/>
            <person name="Moxon E.R."/>
            <person name="Masignani V."/>
        </authorList>
    </citation>
    <scope>NUCLEOTIDE SEQUENCE [LARGE SCALE GENOMIC DNA]</scope>
    <source>
        <strain>70585</strain>
    </source>
</reference>
<sequence>MKNTGKRIDLIANRKPQSQRVLYELRDRLKRNQFILNDTNPDIVISIGGDGMLLSAFHKYENQLDKVRFIGLHTGHLGFYTDYRDFELDKLVTNLQLDTGARVSYPVLNVKVFLENGEVKIFRALNEASIRRSDRTMVADIVINGVPFERFRGDGLTVSTPTGSTAYNKSLGGAVLHPTIEALQLTEIASLNNRVYRTLGSSIIVPKKDKIELIPTRNDYHTISVDNSVYSFRNIERIEYQIDHHKIHFVATPSHTSFWNRVKDAFIGEVDE</sequence>
<accession>C1C794</accession>
<protein>
    <recommendedName>
        <fullName evidence="1">NAD kinase</fullName>
        <ecNumber evidence="1">2.7.1.23</ecNumber>
    </recommendedName>
    <alternativeName>
        <fullName evidence="1">ATP-dependent NAD kinase</fullName>
    </alternativeName>
</protein>
<dbReference type="EC" id="2.7.1.23" evidence="1"/>
<dbReference type="EMBL" id="CP000918">
    <property type="protein sequence ID" value="ACO16972.1"/>
    <property type="molecule type" value="Genomic_DNA"/>
</dbReference>
<dbReference type="RefSeq" id="WP_000799053.1">
    <property type="nucleotide sequence ID" value="NC_012468.1"/>
</dbReference>
<dbReference type="SMR" id="C1C794"/>
<dbReference type="KEGG" id="snm:SP70585_1171"/>
<dbReference type="HOGENOM" id="CLU_008831_0_3_9"/>
<dbReference type="Proteomes" id="UP000002211">
    <property type="component" value="Chromosome"/>
</dbReference>
<dbReference type="GO" id="GO:0005737">
    <property type="term" value="C:cytoplasm"/>
    <property type="evidence" value="ECO:0007669"/>
    <property type="project" value="UniProtKB-SubCell"/>
</dbReference>
<dbReference type="GO" id="GO:0005524">
    <property type="term" value="F:ATP binding"/>
    <property type="evidence" value="ECO:0007669"/>
    <property type="project" value="UniProtKB-KW"/>
</dbReference>
<dbReference type="GO" id="GO:0046872">
    <property type="term" value="F:metal ion binding"/>
    <property type="evidence" value="ECO:0007669"/>
    <property type="project" value="UniProtKB-UniRule"/>
</dbReference>
<dbReference type="GO" id="GO:0051287">
    <property type="term" value="F:NAD binding"/>
    <property type="evidence" value="ECO:0007669"/>
    <property type="project" value="UniProtKB-ARBA"/>
</dbReference>
<dbReference type="GO" id="GO:0003951">
    <property type="term" value="F:NAD+ kinase activity"/>
    <property type="evidence" value="ECO:0007669"/>
    <property type="project" value="UniProtKB-UniRule"/>
</dbReference>
<dbReference type="GO" id="GO:0019674">
    <property type="term" value="P:NAD metabolic process"/>
    <property type="evidence" value="ECO:0007669"/>
    <property type="project" value="InterPro"/>
</dbReference>
<dbReference type="GO" id="GO:0006741">
    <property type="term" value="P:NADP biosynthetic process"/>
    <property type="evidence" value="ECO:0007669"/>
    <property type="project" value="UniProtKB-UniRule"/>
</dbReference>
<dbReference type="FunFam" id="2.60.200.30:FF:000002">
    <property type="entry name" value="NAD kinase"/>
    <property type="match status" value="1"/>
</dbReference>
<dbReference type="Gene3D" id="3.40.50.10330">
    <property type="entry name" value="Probable inorganic polyphosphate/atp-NAD kinase, domain 1"/>
    <property type="match status" value="1"/>
</dbReference>
<dbReference type="Gene3D" id="2.60.200.30">
    <property type="entry name" value="Probable inorganic polyphosphate/atp-NAD kinase, domain 2"/>
    <property type="match status" value="1"/>
</dbReference>
<dbReference type="HAMAP" id="MF_00361">
    <property type="entry name" value="NAD_kinase"/>
    <property type="match status" value="1"/>
</dbReference>
<dbReference type="InterPro" id="IPR017438">
    <property type="entry name" value="ATP-NAD_kinase_N"/>
</dbReference>
<dbReference type="InterPro" id="IPR017437">
    <property type="entry name" value="ATP-NAD_kinase_PpnK-typ_C"/>
</dbReference>
<dbReference type="InterPro" id="IPR016064">
    <property type="entry name" value="NAD/diacylglycerol_kinase_sf"/>
</dbReference>
<dbReference type="InterPro" id="IPR002504">
    <property type="entry name" value="NADK"/>
</dbReference>
<dbReference type="NCBIfam" id="NF003424">
    <property type="entry name" value="PRK04885.1"/>
    <property type="match status" value="1"/>
</dbReference>
<dbReference type="PANTHER" id="PTHR20275">
    <property type="entry name" value="NAD KINASE"/>
    <property type="match status" value="1"/>
</dbReference>
<dbReference type="PANTHER" id="PTHR20275:SF0">
    <property type="entry name" value="NAD KINASE"/>
    <property type="match status" value="1"/>
</dbReference>
<dbReference type="Pfam" id="PF20143">
    <property type="entry name" value="NAD_kinase_C"/>
    <property type="match status" value="1"/>
</dbReference>
<dbReference type="SUPFAM" id="SSF111331">
    <property type="entry name" value="NAD kinase/diacylglycerol kinase-like"/>
    <property type="match status" value="1"/>
</dbReference>
<feature type="chain" id="PRO_1000192521" description="NAD kinase">
    <location>
        <begin position="1"/>
        <end position="272"/>
    </location>
</feature>
<feature type="active site" description="Proton acceptor" evidence="1">
    <location>
        <position position="50"/>
    </location>
</feature>
<feature type="binding site" evidence="1">
    <location>
        <begin position="50"/>
        <end position="51"/>
    </location>
    <ligand>
        <name>NAD(+)</name>
        <dbReference type="ChEBI" id="CHEBI:57540"/>
    </ligand>
</feature>
<feature type="binding site" evidence="1">
    <location>
        <begin position="126"/>
        <end position="127"/>
    </location>
    <ligand>
        <name>NAD(+)</name>
        <dbReference type="ChEBI" id="CHEBI:57540"/>
    </ligand>
</feature>
<feature type="binding site" evidence="1">
    <location>
        <position position="152"/>
    </location>
    <ligand>
        <name>NAD(+)</name>
        <dbReference type="ChEBI" id="CHEBI:57540"/>
    </ligand>
</feature>
<feature type="binding site" evidence="1">
    <location>
        <position position="154"/>
    </location>
    <ligand>
        <name>NAD(+)</name>
        <dbReference type="ChEBI" id="CHEBI:57540"/>
    </ligand>
</feature>
<feature type="binding site" evidence="1">
    <location>
        <begin position="165"/>
        <end position="170"/>
    </location>
    <ligand>
        <name>NAD(+)</name>
        <dbReference type="ChEBI" id="CHEBI:57540"/>
    </ligand>
</feature>
<feature type="binding site" evidence="1">
    <location>
        <position position="189"/>
    </location>
    <ligand>
        <name>NAD(+)</name>
        <dbReference type="ChEBI" id="CHEBI:57540"/>
    </ligand>
</feature>
<evidence type="ECO:0000255" key="1">
    <source>
        <dbReference type="HAMAP-Rule" id="MF_00361"/>
    </source>
</evidence>